<reference key="1">
    <citation type="journal article" date="1998" name="Nat. Genet.">
        <title>A gene encoding a novel RFX-associated transactivator is mutated in the majority of MHC class II deficiency patients.</title>
        <authorList>
            <person name="Masternak K."/>
            <person name="Barras E."/>
            <person name="Zufferey M."/>
            <person name="Conrad B."/>
            <person name="Corthals G."/>
            <person name="Aebersold R."/>
            <person name="Sanchez J.-C."/>
            <person name="Hochstrasser D.F."/>
            <person name="Mach B."/>
            <person name="Reith W."/>
        </authorList>
    </citation>
    <scope>NUCLEOTIDE SEQUENCE [MRNA] (ISOFORM 1)</scope>
    <scope>IDENTIFICATION BY MASS SPECTROMETRY</scope>
    <scope>FUNCTION</scope>
    <scope>INVOLVEMENT IN MHC2D2</scope>
    <source>
        <tissue>B-cell</tissue>
    </source>
</reference>
<reference key="2">
    <citation type="journal article" date="1999" name="Immunity">
        <title>RFX-B is the gene responsible for the most common cause of the bare lymphocyte syndrome, an MHC class II immunodeficiency.</title>
        <authorList>
            <person name="Nagarajan U.M."/>
            <person name="Louis-Plence P."/>
            <person name="DeSandro A."/>
            <person name="Nilsen R."/>
            <person name="Bushey A."/>
            <person name="Boss J.M."/>
        </authorList>
    </citation>
    <scope>NUCLEOTIDE SEQUENCE [MRNA] (ISOFORMS 1 AND 2)</scope>
    <scope>PROTEIN SEQUENCE OF 79-95; 180-198; 100-210 AND 238-248</scope>
    <scope>FUNCTION (ISOFORMS 1 AND 2)</scope>
    <scope>INVOLVEMENT IN MHC2D2</scope>
    <source>
        <tissue>Lymphoblast</tissue>
    </source>
</reference>
<reference key="3">
    <citation type="journal article" date="1999" name="Immunity">
        <authorList>
            <person name="Nagarajan U.M."/>
            <person name="Louis-Plence P."/>
            <person name="DeSandro A."/>
            <person name="Nilsen R."/>
            <person name="Bushey A."/>
            <person name="Boss J.M."/>
        </authorList>
    </citation>
    <scope>ERRATUM OF PUBMED:10072068</scope>
</reference>
<reference key="4">
    <citation type="journal article" date="2000" name="Genome Res.">
        <title>Cloning and functional analysis of cDNAs with open reading frames for 300 previously undefined genes expressed in CD34+ hematopoietic stem/progenitor cells.</title>
        <authorList>
            <person name="Zhang Q.-H."/>
            <person name="Ye M."/>
            <person name="Wu X.-Y."/>
            <person name="Ren S.-X."/>
            <person name="Zhao M."/>
            <person name="Zhao C.-J."/>
            <person name="Fu G."/>
            <person name="Shen Y."/>
            <person name="Fan H.-Y."/>
            <person name="Lu G."/>
            <person name="Zhong M."/>
            <person name="Xu X.-R."/>
            <person name="Han Z.-G."/>
            <person name="Zhang J.-W."/>
            <person name="Tao J."/>
            <person name="Huang Q.-H."/>
            <person name="Zhou J."/>
            <person name="Hu G.-X."/>
            <person name="Gu J."/>
            <person name="Chen S.-J."/>
            <person name="Chen Z."/>
        </authorList>
    </citation>
    <scope>NUCLEOTIDE SEQUENCE [MRNA] (ISOFORM 1)</scope>
    <source>
        <tissue>Umbilical cord blood</tissue>
    </source>
</reference>
<reference key="5">
    <citation type="submission" date="2004-06" db="EMBL/GenBank/DDBJ databases">
        <title>Cloning of human full open reading frames in Gateway(TM) system entry vector (pDONR201).</title>
        <authorList>
            <person name="Ebert L."/>
            <person name="Schick M."/>
            <person name="Neubert P."/>
            <person name="Schatten R."/>
            <person name="Henze S."/>
            <person name="Korn B."/>
        </authorList>
    </citation>
    <scope>NUCLEOTIDE SEQUENCE [LARGE SCALE MRNA] (ISOFORM 1)</scope>
</reference>
<reference key="6">
    <citation type="journal article" date="2004" name="Nature">
        <title>The DNA sequence and biology of human chromosome 19.</title>
        <authorList>
            <person name="Grimwood J."/>
            <person name="Gordon L.A."/>
            <person name="Olsen A.S."/>
            <person name="Terry A."/>
            <person name="Schmutz J."/>
            <person name="Lamerdin J.E."/>
            <person name="Hellsten U."/>
            <person name="Goodstein D."/>
            <person name="Couronne O."/>
            <person name="Tran-Gyamfi M."/>
            <person name="Aerts A."/>
            <person name="Altherr M."/>
            <person name="Ashworth L."/>
            <person name="Bajorek E."/>
            <person name="Black S."/>
            <person name="Branscomb E."/>
            <person name="Caenepeel S."/>
            <person name="Carrano A.V."/>
            <person name="Caoile C."/>
            <person name="Chan Y.M."/>
            <person name="Christensen M."/>
            <person name="Cleland C.A."/>
            <person name="Copeland A."/>
            <person name="Dalin E."/>
            <person name="Dehal P."/>
            <person name="Denys M."/>
            <person name="Detter J.C."/>
            <person name="Escobar J."/>
            <person name="Flowers D."/>
            <person name="Fotopulos D."/>
            <person name="Garcia C."/>
            <person name="Georgescu A.M."/>
            <person name="Glavina T."/>
            <person name="Gomez M."/>
            <person name="Gonzales E."/>
            <person name="Groza M."/>
            <person name="Hammon N."/>
            <person name="Hawkins T."/>
            <person name="Haydu L."/>
            <person name="Ho I."/>
            <person name="Huang W."/>
            <person name="Israni S."/>
            <person name="Jett J."/>
            <person name="Kadner K."/>
            <person name="Kimball H."/>
            <person name="Kobayashi A."/>
            <person name="Larionov V."/>
            <person name="Leem S.-H."/>
            <person name="Lopez F."/>
            <person name="Lou Y."/>
            <person name="Lowry S."/>
            <person name="Malfatti S."/>
            <person name="Martinez D."/>
            <person name="McCready P.M."/>
            <person name="Medina C."/>
            <person name="Morgan J."/>
            <person name="Nelson K."/>
            <person name="Nolan M."/>
            <person name="Ovcharenko I."/>
            <person name="Pitluck S."/>
            <person name="Pollard M."/>
            <person name="Popkie A.P."/>
            <person name="Predki P."/>
            <person name="Quan G."/>
            <person name="Ramirez L."/>
            <person name="Rash S."/>
            <person name="Retterer J."/>
            <person name="Rodriguez A."/>
            <person name="Rogers S."/>
            <person name="Salamov A."/>
            <person name="Salazar A."/>
            <person name="She X."/>
            <person name="Smith D."/>
            <person name="Slezak T."/>
            <person name="Solovyev V."/>
            <person name="Thayer N."/>
            <person name="Tice H."/>
            <person name="Tsai M."/>
            <person name="Ustaszewska A."/>
            <person name="Vo N."/>
            <person name="Wagner M."/>
            <person name="Wheeler J."/>
            <person name="Wu K."/>
            <person name="Xie G."/>
            <person name="Yang J."/>
            <person name="Dubchak I."/>
            <person name="Furey T.S."/>
            <person name="DeJong P."/>
            <person name="Dickson M."/>
            <person name="Gordon D."/>
            <person name="Eichler E.E."/>
            <person name="Pennacchio L.A."/>
            <person name="Richardson P."/>
            <person name="Stubbs L."/>
            <person name="Rokhsar D.S."/>
            <person name="Myers R.M."/>
            <person name="Rubin E.M."/>
            <person name="Lucas S.M."/>
        </authorList>
    </citation>
    <scope>NUCLEOTIDE SEQUENCE [LARGE SCALE GENOMIC DNA]</scope>
</reference>
<reference key="7">
    <citation type="submission" date="2005-07" db="EMBL/GenBank/DDBJ databases">
        <authorList>
            <person name="Mural R.J."/>
            <person name="Istrail S."/>
            <person name="Sutton G.G."/>
            <person name="Florea L."/>
            <person name="Halpern A.L."/>
            <person name="Mobarry C.M."/>
            <person name="Lippert R."/>
            <person name="Walenz B."/>
            <person name="Shatkay H."/>
            <person name="Dew I."/>
            <person name="Miller J.R."/>
            <person name="Flanigan M.J."/>
            <person name="Edwards N.J."/>
            <person name="Bolanos R."/>
            <person name="Fasulo D."/>
            <person name="Halldorsson B.V."/>
            <person name="Hannenhalli S."/>
            <person name="Turner R."/>
            <person name="Yooseph S."/>
            <person name="Lu F."/>
            <person name="Nusskern D.R."/>
            <person name="Shue B.C."/>
            <person name="Zheng X.H."/>
            <person name="Zhong F."/>
            <person name="Delcher A.L."/>
            <person name="Huson D.H."/>
            <person name="Kravitz S.A."/>
            <person name="Mouchard L."/>
            <person name="Reinert K."/>
            <person name="Remington K.A."/>
            <person name="Clark A.G."/>
            <person name="Waterman M.S."/>
            <person name="Eichler E.E."/>
            <person name="Adams M.D."/>
            <person name="Hunkapiller M.W."/>
            <person name="Myers E.W."/>
            <person name="Venter J.C."/>
        </authorList>
    </citation>
    <scope>NUCLEOTIDE SEQUENCE [LARGE SCALE GENOMIC DNA]</scope>
</reference>
<reference key="8">
    <citation type="journal article" date="2004" name="Genome Res.">
        <title>The status, quality, and expansion of the NIH full-length cDNA project: the Mammalian Gene Collection (MGC).</title>
        <authorList>
            <consortium name="The MGC Project Team"/>
        </authorList>
    </citation>
    <scope>NUCLEOTIDE SEQUENCE [LARGE SCALE MRNA] (ISOFORMS 1 AND 3)</scope>
</reference>
<reference key="9">
    <citation type="journal article" date="2010" name="J. Mol. Biol.">
        <title>Solution structure of the heterotrimeric complex between the interaction domains of RFX5 and RFXAP from the RFX gene regulatory complex.</title>
        <authorList>
            <person name="Laird K.M."/>
            <person name="Briggs L.L."/>
            <person name="Boss J.M."/>
            <person name="Summers M.F."/>
            <person name="Garvie C.W."/>
        </authorList>
    </citation>
    <scope>SUBUNIT</scope>
</reference>
<reference key="10">
    <citation type="journal article" date="2015" name="Structure">
        <title>Ankyrin repeats of ANKRA2 recognize a PxLPxL motif on the 3M syndrome protein CCDC8.</title>
        <authorList>
            <person name="Nie J."/>
            <person name="Xu C."/>
            <person name="Jin J."/>
            <person name="Aka J.A."/>
            <person name="Tempel W."/>
            <person name="Nguyen V."/>
            <person name="You L."/>
            <person name="Weist R."/>
            <person name="Min J."/>
            <person name="Pawson T."/>
            <person name="Yang X.J."/>
        </authorList>
    </citation>
    <scope>INTERACTION WITH RFX7</scope>
</reference>
<reference key="11">
    <citation type="journal article" date="2012" name="Sci. Signal.">
        <title>Sequence-specific recognition of a PxLPxI/L motif by an ankyrin repeat tumbler lock.</title>
        <authorList>
            <person name="Xu C."/>
            <person name="Jin J."/>
            <person name="Bian C."/>
            <person name="Lam R."/>
            <person name="Tian R."/>
            <person name="Weist R."/>
            <person name="You L."/>
            <person name="Nie J."/>
            <person name="Bochkarev A."/>
            <person name="Tempel W."/>
            <person name="Tan C.S."/>
            <person name="Wasney G.A."/>
            <person name="Vedadi M."/>
            <person name="Gish G.D."/>
            <person name="Arrowsmith C.H."/>
            <person name="Pawson T."/>
            <person name="Yang X.J."/>
            <person name="Min J."/>
        </authorList>
    </citation>
    <scope>X-RAY CRYSTALLOGRAPHY (1.57 ANGSTROMS) OF 90-260 IN COMPLEX WITH RFX5 PEPTIDE</scope>
    <scope>CHARACTERIZATION OF VARIANT MHC2D2 PRO-195</scope>
    <scope>MUTAGENESIS OF ASP-121 AND TYR-224</scope>
</reference>
<reference key="12">
    <citation type="submission" date="2014-06" db="PDB data bank">
        <title>Crystal structure of RFXANK ankyrin repeats in complex with RFX7.</title>
        <authorList>
            <person name="Tempel W."/>
            <person name="Xu C."/>
            <person name="Dong A."/>
            <person name="Li Y."/>
            <person name="Bountra C."/>
            <person name="Arrowsmith C.H."/>
            <person name="Edwards A.M."/>
            <person name="Min J."/>
        </authorList>
    </citation>
    <scope>X-RAY CRYSTALLOGRAPHY (1.78 ANGSTROMS) OF 90-260 IN COMPLEX WITH RFX7</scope>
</reference>
<reference key="13">
    <citation type="journal article" date="2000" name="J. Immunol.">
        <title>Novel mutations within the RFX-B gene and partial rescue of MHC and related genes through exogenous class II transactivator in RFX-B-deficient cells.</title>
        <authorList>
            <person name="Nagarajan U.M."/>
            <person name="Peijnenburg A."/>
            <person name="Gobin S.J."/>
            <person name="Boss J.M."/>
            <person name="van den Elsen P.J."/>
        </authorList>
    </citation>
    <scope>VARIANT MHC2D2 PRO-195</scope>
    <scope>FUNCTION</scope>
    <scope>INVOLVEMENT IN MHC2D2</scope>
</reference>
<reference key="14">
    <citation type="journal article" date="2019" name="J. Allergy Clin. Immunol. Pract.">
        <title>MHC-II Deficiency Among Egyptians: Novel Mutations and Unique Phenotypes.</title>
        <authorList>
            <person name="El Hawary R.E."/>
            <person name="Mauracher A.A."/>
            <person name="Meshaal S.S."/>
            <person name="Eldash A."/>
            <person name="Abd Elaziz D.S."/>
            <person name="Alkady R."/>
            <person name="Lotfy S."/>
            <person name="Opitz L."/>
            <person name="Galal N.M."/>
            <person name="Boutros J.A."/>
            <person name="Pachlopnik Schmid J."/>
            <person name="Elmarsafy A.M."/>
        </authorList>
    </citation>
    <scope>VARIANT MHC2D2 PRO-144</scope>
    <scope>INVOLVEMENT IN MHC2D2</scope>
</reference>
<reference key="15">
    <citation type="journal article" date="2023" name="J. Clin. Immunol.">
        <title>Clinical, Immunological, and Genetic Findings in Iranian Patients with MHC-II Deficiency: Confirmation of c.162delG RFXANK Founder Mutation in the Iranian Population.</title>
        <authorList>
            <person name="Mousavi Khorshidi M.S."/>
            <person name="Seeleuthner Y."/>
            <person name="Chavoshzadeh Z."/>
            <person name="Behfar M."/>
            <person name="Hamidieh A.A."/>
            <person name="Alimadadi H."/>
            <person name="Sherkat R."/>
            <person name="Momen T."/>
            <person name="Behniafard N."/>
            <person name="Eskandarzadeh S."/>
            <person name="Mansouri M."/>
            <person name="Behnam M."/>
            <person name="Mahdavi M."/>
            <person name="Heydarazad Zadeh M."/>
            <person name="Shokri M."/>
            <person name="Alizadeh F."/>
            <person name="Movahedi M."/>
            <person name="Momenilandi M."/>
            <person name="Keramatipour M."/>
            <person name="Casanova J.L."/>
            <person name="Cobat A."/>
            <person name="Abel L."/>
            <person name="Shahrooei M."/>
            <person name="Parvaneh N."/>
        </authorList>
    </citation>
    <scope>VARIANTS MHC2D2 HIS-121 AND 212-ARG--GLU-260 DEL</scope>
    <scope>INVOLVEMENT IN MHC2D2</scope>
</reference>
<dbReference type="EMBL" id="AF094760">
    <property type="protein sequence ID" value="AAC69883.1"/>
    <property type="molecule type" value="mRNA"/>
</dbReference>
<dbReference type="EMBL" id="AF105427">
    <property type="protein sequence ID" value="AAD17972.1"/>
    <property type="molecule type" value="mRNA"/>
</dbReference>
<dbReference type="EMBL" id="AF105428">
    <property type="protein sequence ID" value="AAD17973.1"/>
    <property type="molecule type" value="mRNA"/>
</dbReference>
<dbReference type="EMBL" id="AF077196">
    <property type="protein sequence ID" value="AAD26991.1"/>
    <property type="molecule type" value="mRNA"/>
</dbReference>
<dbReference type="EMBL" id="CR542199">
    <property type="protein sequence ID" value="CAG46996.1"/>
    <property type="molecule type" value="mRNA"/>
</dbReference>
<dbReference type="EMBL" id="AC002126">
    <property type="status" value="NOT_ANNOTATED_CDS"/>
    <property type="molecule type" value="Genomic_DNA"/>
</dbReference>
<dbReference type="EMBL" id="AC003110">
    <property type="protein sequence ID" value="AAB86654.1"/>
    <property type="molecule type" value="Genomic_DNA"/>
</dbReference>
<dbReference type="EMBL" id="CH471106">
    <property type="protein sequence ID" value="EAW84795.1"/>
    <property type="molecule type" value="Genomic_DNA"/>
</dbReference>
<dbReference type="EMBL" id="BC114558">
    <property type="protein sequence ID" value="AAI14559.1"/>
    <property type="molecule type" value="mRNA"/>
</dbReference>
<dbReference type="EMBL" id="BC114563">
    <property type="protein sequence ID" value="AAI14564.1"/>
    <property type="molecule type" value="mRNA"/>
</dbReference>
<dbReference type="CCDS" id="CCDS12395.1">
    <molecule id="O14593-1"/>
</dbReference>
<dbReference type="CCDS" id="CCDS62611.1">
    <molecule id="O14593-3"/>
</dbReference>
<dbReference type="RefSeq" id="NP_001265656.1">
    <molecule id="O14593-3"/>
    <property type="nucleotide sequence ID" value="NM_001278727.2"/>
</dbReference>
<dbReference type="RefSeq" id="NP_001265657.1">
    <property type="nucleotide sequence ID" value="NM_001278728.1"/>
</dbReference>
<dbReference type="RefSeq" id="NP_001357162.1">
    <molecule id="O14593-1"/>
    <property type="nucleotide sequence ID" value="NM_001370233.1"/>
</dbReference>
<dbReference type="RefSeq" id="NP_001357163.1">
    <molecule id="O14593-3"/>
    <property type="nucleotide sequence ID" value="NM_001370234.1"/>
</dbReference>
<dbReference type="RefSeq" id="NP_003712.1">
    <molecule id="O14593-1"/>
    <property type="nucleotide sequence ID" value="NM_003721.4"/>
</dbReference>
<dbReference type="RefSeq" id="NP_604389.1">
    <property type="nucleotide sequence ID" value="NM_134440.2"/>
</dbReference>
<dbReference type="RefSeq" id="XP_005260191.1">
    <molecule id="O14593-1"/>
    <property type="nucleotide sequence ID" value="XM_005260134.6"/>
</dbReference>
<dbReference type="RefSeq" id="XP_005260192.1">
    <property type="nucleotide sequence ID" value="XM_005260135.3"/>
</dbReference>
<dbReference type="RefSeq" id="XP_016882904.1">
    <property type="nucleotide sequence ID" value="XM_017027415.1"/>
</dbReference>
<dbReference type="RefSeq" id="XP_016882905.1">
    <property type="nucleotide sequence ID" value="XM_017027416.1"/>
</dbReference>
<dbReference type="RefSeq" id="XP_054178453.1">
    <molecule id="O14593-1"/>
    <property type="nucleotide sequence ID" value="XM_054322478.1"/>
</dbReference>
<dbReference type="PDB" id="3UXG">
    <property type="method" value="X-ray"/>
    <property type="resolution" value="1.85 A"/>
    <property type="chains" value="A=90-260"/>
</dbReference>
<dbReference type="PDB" id="3V30">
    <property type="method" value="X-ray"/>
    <property type="resolution" value="1.57 A"/>
    <property type="chains" value="A=90-260"/>
</dbReference>
<dbReference type="PDB" id="6MEW">
    <property type="method" value="X-ray"/>
    <property type="resolution" value="1.78 A"/>
    <property type="chains" value="A/C=90-260"/>
</dbReference>
<dbReference type="PDBsum" id="3UXG"/>
<dbReference type="PDBsum" id="3V30"/>
<dbReference type="PDBsum" id="6MEW"/>
<dbReference type="SMR" id="O14593"/>
<dbReference type="BioGRID" id="114180">
    <property type="interactions" value="166"/>
</dbReference>
<dbReference type="ComplexPortal" id="CPX-6461">
    <property type="entry name" value="RFX gene regulatory complex"/>
</dbReference>
<dbReference type="CORUM" id="O14593"/>
<dbReference type="ELM" id="O14593"/>
<dbReference type="FunCoup" id="O14593">
    <property type="interactions" value="1831"/>
</dbReference>
<dbReference type="IntAct" id="O14593">
    <property type="interactions" value="126"/>
</dbReference>
<dbReference type="STRING" id="9606.ENSP00000305071"/>
<dbReference type="iPTMnet" id="O14593"/>
<dbReference type="PhosphoSitePlus" id="O14593"/>
<dbReference type="BioMuta" id="RFXANK"/>
<dbReference type="jPOST" id="O14593"/>
<dbReference type="MassIVE" id="O14593"/>
<dbReference type="PaxDb" id="9606-ENSP00000305071"/>
<dbReference type="PeptideAtlas" id="O14593"/>
<dbReference type="ProteomicsDB" id="48101">
    <molecule id="O14593-1"/>
</dbReference>
<dbReference type="ProteomicsDB" id="48102">
    <molecule id="O14593-2"/>
</dbReference>
<dbReference type="ProteomicsDB" id="61266"/>
<dbReference type="Pumba" id="O14593"/>
<dbReference type="Antibodypedia" id="15290">
    <property type="antibodies" value="361 antibodies from 21 providers"/>
</dbReference>
<dbReference type="DNASU" id="8625"/>
<dbReference type="Ensembl" id="ENST00000303088.9">
    <molecule id="O14593-1"/>
    <property type="protein sequence ID" value="ENSP00000305071.2"/>
    <property type="gene ID" value="ENSG00000064490.14"/>
</dbReference>
<dbReference type="Ensembl" id="ENST00000407360.7">
    <molecule id="O14593-1"/>
    <property type="protein sequence ID" value="ENSP00000384572.3"/>
    <property type="gene ID" value="ENSG00000064490.14"/>
</dbReference>
<dbReference type="Ensembl" id="ENST00000456252.7">
    <molecule id="O14593-3"/>
    <property type="protein sequence ID" value="ENSP00000409138.2"/>
    <property type="gene ID" value="ENSG00000064490.14"/>
</dbReference>
<dbReference type="GeneID" id="8625"/>
<dbReference type="KEGG" id="hsa:8625"/>
<dbReference type="MANE-Select" id="ENST00000303088.9">
    <property type="protein sequence ID" value="ENSP00000305071.2"/>
    <property type="RefSeq nucleotide sequence ID" value="NM_003721.4"/>
    <property type="RefSeq protein sequence ID" value="NP_003712.1"/>
</dbReference>
<dbReference type="UCSC" id="uc002nls.4">
    <molecule id="O14593-1"/>
    <property type="organism name" value="human"/>
</dbReference>
<dbReference type="AGR" id="HGNC:9987"/>
<dbReference type="CTD" id="8625"/>
<dbReference type="DisGeNET" id="8625"/>
<dbReference type="GeneCards" id="RFXANK"/>
<dbReference type="HGNC" id="HGNC:9987">
    <property type="gene designation" value="RFXANK"/>
</dbReference>
<dbReference type="HPA" id="ENSG00000064490">
    <property type="expression patterns" value="Low tissue specificity"/>
</dbReference>
<dbReference type="MalaCards" id="RFXANK"/>
<dbReference type="MIM" id="603200">
    <property type="type" value="gene"/>
</dbReference>
<dbReference type="MIM" id="620815">
    <property type="type" value="phenotype"/>
</dbReference>
<dbReference type="neXtProt" id="NX_O14593"/>
<dbReference type="OpenTargets" id="ENSG00000064490"/>
<dbReference type="Orphanet" id="572">
    <property type="disease" value="Immunodeficiency by defective expression of MHC class II"/>
</dbReference>
<dbReference type="PharmGKB" id="PA34357"/>
<dbReference type="VEuPathDB" id="HostDB:ENSG00000064490"/>
<dbReference type="eggNOG" id="KOG0502">
    <property type="taxonomic scope" value="Eukaryota"/>
</dbReference>
<dbReference type="GeneTree" id="ENSGT00940000160753"/>
<dbReference type="HOGENOM" id="CLU_000134_23_0_1"/>
<dbReference type="InParanoid" id="O14593"/>
<dbReference type="OMA" id="EQYMTAV"/>
<dbReference type="OrthoDB" id="10251692at2759"/>
<dbReference type="PAN-GO" id="O14593">
    <property type="GO annotations" value="2 GO annotations based on evolutionary models"/>
</dbReference>
<dbReference type="PhylomeDB" id="O14593"/>
<dbReference type="TreeFam" id="TF333112"/>
<dbReference type="PathwayCommons" id="O14593"/>
<dbReference type="SignaLink" id="O14593"/>
<dbReference type="SIGNOR" id="O14593"/>
<dbReference type="BioGRID-ORCS" id="8625">
    <property type="hits" value="26 hits in 1158 CRISPR screens"/>
</dbReference>
<dbReference type="ChiTaRS" id="RFXANK">
    <property type="organism name" value="human"/>
</dbReference>
<dbReference type="EvolutionaryTrace" id="O14593"/>
<dbReference type="GeneWiki" id="RFXANK"/>
<dbReference type="GenomeRNAi" id="8625"/>
<dbReference type="Pharos" id="O14593">
    <property type="development level" value="Tbio"/>
</dbReference>
<dbReference type="PRO" id="PR:O14593"/>
<dbReference type="Proteomes" id="UP000005640">
    <property type="component" value="Chromosome 19"/>
</dbReference>
<dbReference type="RNAct" id="O14593">
    <property type="molecule type" value="protein"/>
</dbReference>
<dbReference type="Bgee" id="ENSG00000064490">
    <property type="expression patterns" value="Expressed in lower esophagus mucosa and 189 other cell types or tissues"/>
</dbReference>
<dbReference type="ExpressionAtlas" id="O14593">
    <property type="expression patterns" value="baseline and differential"/>
</dbReference>
<dbReference type="GO" id="GO:0005829">
    <property type="term" value="C:cytosol"/>
    <property type="evidence" value="ECO:0000314"/>
    <property type="project" value="HPA"/>
</dbReference>
<dbReference type="GO" id="GO:0045171">
    <property type="term" value="C:intercellular bridge"/>
    <property type="evidence" value="ECO:0000314"/>
    <property type="project" value="HPA"/>
</dbReference>
<dbReference type="GO" id="GO:0005654">
    <property type="term" value="C:nucleoplasm"/>
    <property type="evidence" value="ECO:0000314"/>
    <property type="project" value="HPA"/>
</dbReference>
<dbReference type="GO" id="GO:0005634">
    <property type="term" value="C:nucleus"/>
    <property type="evidence" value="ECO:0000314"/>
    <property type="project" value="ComplexPortal"/>
</dbReference>
<dbReference type="GO" id="GO:0090575">
    <property type="term" value="C:RNA polymerase II transcription regulator complex"/>
    <property type="evidence" value="ECO:0000353"/>
    <property type="project" value="ARUK-UCL"/>
</dbReference>
<dbReference type="GO" id="GO:0003677">
    <property type="term" value="F:DNA binding"/>
    <property type="evidence" value="ECO:0007669"/>
    <property type="project" value="UniProtKB-KW"/>
</dbReference>
<dbReference type="GO" id="GO:0042826">
    <property type="term" value="F:histone deacetylase binding"/>
    <property type="evidence" value="ECO:0007669"/>
    <property type="project" value="Ensembl"/>
</dbReference>
<dbReference type="GO" id="GO:0045348">
    <property type="term" value="P:positive regulation of MHC class II biosynthetic process"/>
    <property type="evidence" value="ECO:0000303"/>
    <property type="project" value="ComplexPortal"/>
</dbReference>
<dbReference type="GO" id="GO:0045944">
    <property type="term" value="P:positive regulation of transcription by RNA polymerase II"/>
    <property type="evidence" value="ECO:0000314"/>
    <property type="project" value="GO_Central"/>
</dbReference>
<dbReference type="GO" id="GO:0007265">
    <property type="term" value="P:Ras protein signal transduction"/>
    <property type="evidence" value="ECO:0007669"/>
    <property type="project" value="Ensembl"/>
</dbReference>
<dbReference type="FunFam" id="1.25.40.20:FF:000031">
    <property type="entry name" value="Ankyrin repeat, family A (RFXANK-like), 2"/>
    <property type="match status" value="1"/>
</dbReference>
<dbReference type="Gene3D" id="1.25.40.20">
    <property type="entry name" value="Ankyrin repeat-containing domain"/>
    <property type="match status" value="1"/>
</dbReference>
<dbReference type="IDEAL" id="IID00427"/>
<dbReference type="InterPro" id="IPR002110">
    <property type="entry name" value="Ankyrin_rpt"/>
</dbReference>
<dbReference type="InterPro" id="IPR036770">
    <property type="entry name" value="Ankyrin_rpt-contain_sf"/>
</dbReference>
<dbReference type="InterPro" id="IPR017362">
    <property type="entry name" value="DNA-bd_RFXANK"/>
</dbReference>
<dbReference type="PANTHER" id="PTHR24124">
    <property type="entry name" value="ANKYRIN REPEAT FAMILY A"/>
    <property type="match status" value="1"/>
</dbReference>
<dbReference type="PANTHER" id="PTHR24124:SF4">
    <property type="entry name" value="DNA-BINDING PROTEIN RFXANK"/>
    <property type="match status" value="1"/>
</dbReference>
<dbReference type="Pfam" id="PF12796">
    <property type="entry name" value="Ank_2"/>
    <property type="match status" value="1"/>
</dbReference>
<dbReference type="PIRSF" id="PIRSF038034">
    <property type="entry name" value="DNA-binding_RFXANK"/>
    <property type="match status" value="1"/>
</dbReference>
<dbReference type="SMART" id="SM00248">
    <property type="entry name" value="ANK"/>
    <property type="match status" value="4"/>
</dbReference>
<dbReference type="SUPFAM" id="SSF48403">
    <property type="entry name" value="Ankyrin repeat"/>
    <property type="match status" value="1"/>
</dbReference>
<dbReference type="PROSITE" id="PS50297">
    <property type="entry name" value="ANK_REP_REGION"/>
    <property type="match status" value="1"/>
</dbReference>
<dbReference type="PROSITE" id="PS50088">
    <property type="entry name" value="ANK_REPEAT"/>
    <property type="match status" value="3"/>
</dbReference>
<protein>
    <recommendedName>
        <fullName>DNA-binding protein RFXANK</fullName>
    </recommendedName>
    <alternativeName>
        <fullName>Ankyrin repeat family A protein 1</fullName>
    </alternativeName>
    <alternativeName>
        <fullName>Regulatory factor X subunit B</fullName>
        <shortName>RFX-B</shortName>
    </alternativeName>
    <alternativeName>
        <fullName>Regulatory factor X-associated ankyrin-containing protein</fullName>
    </alternativeName>
</protein>
<accession>O14593</accession>
<accession>O95839</accession>
<accession>Q24JQ1</accession>
<accession>Q6FGA8</accession>
<proteinExistence type="evidence at protein level"/>
<sequence>MELTQPAEDLIQTQQTPASELGDPEDPGEEAADGSDTVVLSLFPCTPEPVNPEPDASVSSPQAGSSLKHSTTLTNRQRGNEVSALPATLDSLSIHQLAAQGELDQLKEHLRKGDNLVNKPDERGFTPLIWASAFGEIETVRFLLEWGADPHILAKERESALSLASTGGYTDIVGLLLERDVDINIYDWNGGTPLLYAVRGNHVKCVEALLARGADLTTEADSGYTPMDLAVALGYRKVQQVIENHILKLFQSNLVPADPE</sequence>
<comment type="function">
    <text evidence="1 3 4 10">Activates transcription from class II MHC promoters. Activation requires the activity of the MHC class II transactivator/CIITA. May regulate other genes in the cell. RFX binds the X1 box of MHC-II promoters (PubMed:10072068, PubMed:10725724, PubMed:9806546). May also potentiate the activation of RAF1 (By similarity).</text>
</comment>
<comment type="function">
    <text evidence="3">Isoform 2 is not involved in the positive regulation of MHC class II genes.</text>
</comment>
<comment type="subunit">
    <text evidence="1 5 6 7 13">Forms homodimers (By similarity). The RFX heterotetrameric complex consists of 2 molecules of RFX5 and one each of RFXAP and RFX-B/RFXANK; with each subunit representing a separate complementation group. Interacts (via ankyrin repeats) with RFX5 (via PxLPxI/L motif); the interaction is direct. RFX forms cooperative DNA binding complexes with X2BP and CBF/NF-Y. RFX associates with CIITA to form an active transcriptional complex (PubMed:20732328, PubMed:22649097). Interacts with RAF1 (By similarity). Interacts (via ankyrin repeats) with RFX7 (via PxLPxI/L motif) (PubMed:25752541).</text>
</comment>
<comment type="interaction">
    <interactant intactId="EBI-1057665">
        <id>O14593</id>
    </interactant>
    <interactant intactId="EBI-923266">
        <id>P48382</id>
        <label>RFX5</label>
    </interactant>
    <organismsDiffer>false</organismsDiffer>
    <experiments>11</experiments>
</comment>
<comment type="interaction">
    <interactant intactId="EBI-1057665">
        <id>O14593</id>
    </interactant>
    <interactant intactId="EBI-1222187">
        <id>Q2KHR2</id>
        <label>RFX7</label>
    </interactant>
    <organismsDiffer>false</organismsDiffer>
    <experiments>5</experiments>
</comment>
<comment type="interaction">
    <interactant intactId="EBI-1057665">
        <id>O14593</id>
    </interactant>
    <interactant intactId="EBI-3929296">
        <id>O00287</id>
        <label>RFXAP</label>
    </interactant>
    <organismsDiffer>false</organismsDiffer>
    <experiments>6</experiments>
</comment>
<comment type="subcellular location">
    <subcellularLocation>
        <location evidence="1">Cytoplasm</location>
    </subcellularLocation>
    <subcellularLocation>
        <location evidence="1">Nucleus</location>
    </subcellularLocation>
</comment>
<comment type="alternative products">
    <event type="alternative splicing"/>
    <isoform>
        <id>O14593-1</id>
        <name>1</name>
        <name>Long</name>
        <sequence type="displayed"/>
    </isoform>
    <isoform>
        <id>O14593-2</id>
        <name>2</name>
        <name>RFX-B-delta5</name>
        <sequence type="described" ref="VSP_000283 VSP_000284 VSP_054618"/>
    </isoform>
    <isoform>
        <id>O14593-3</id>
        <name>3</name>
        <sequence type="described" ref="VSP_000284"/>
    </isoform>
</comment>
<comment type="tissue specificity">
    <text>Ubiquitous.</text>
</comment>
<comment type="domain">
    <text evidence="1 5 6">Interacts with RAF1 via its C-terminal ankyrin repeat domain. The same domain also mediates its homodimerization (By similarity). The third ankyrin repeat is required for association with the two other RFX subunits; RFX5 and RFXAP. The three central ANK repeats mediate binding to the PxLPxI/L motif of RFX5 (PubMed:20732328, PubMed:22649097).</text>
</comment>
<comment type="PTM">
    <text evidence="1">Phosphorylated by RAF1.</text>
</comment>
<comment type="disease" evidence="3 4 6 8 9 10">
    <disease id="DI-06905">
        <name>MHC class II deficiency 2</name>
        <acronym>MHC2D2</acronym>
        <description>An autosomal recessive disorder characterized by immunodeficiency and recurrent bacterial, viral, fungal and parasitic infections in early infancy. Additional manifestations include failure to thrive, chronic diarrhea, and autoimmune features and allergies that may be present in some patients. Death often occurs in infancy or early childhood.</description>
        <dbReference type="MIM" id="620815"/>
    </disease>
    <text>The disease is caused by variants affecting the gene represented in this entry.</text>
</comment>
<comment type="online information" name="RFXANKbase">
    <link uri="https://databases.lovd.nl/shared/genes/RFXANK"/>
    <text>RFXANK mutation db</text>
</comment>
<gene>
    <name type="primary">RFXANK</name>
    <name type="synonym">ANKRA1</name>
    <name type="synonym">RFXB</name>
</gene>
<keyword id="KW-0002">3D-structure</keyword>
<keyword id="KW-0010">Activator</keyword>
<keyword id="KW-0025">Alternative splicing</keyword>
<keyword id="KW-0040">ANK repeat</keyword>
<keyword id="KW-0963">Cytoplasm</keyword>
<keyword id="KW-0903">Direct protein sequencing</keyword>
<keyword id="KW-0225">Disease variant</keyword>
<keyword id="KW-0238">DNA-binding</keyword>
<keyword id="KW-0539">Nucleus</keyword>
<keyword id="KW-1267">Proteomics identification</keyword>
<keyword id="KW-1185">Reference proteome</keyword>
<keyword id="KW-0677">Repeat</keyword>
<keyword id="KW-0705">SCID</keyword>
<keyword id="KW-0804">Transcription</keyword>
<keyword id="KW-0805">Transcription regulation</keyword>
<organism>
    <name type="scientific">Homo sapiens</name>
    <name type="common">Human</name>
    <dbReference type="NCBI Taxonomy" id="9606"/>
    <lineage>
        <taxon>Eukaryota</taxon>
        <taxon>Metazoa</taxon>
        <taxon>Chordata</taxon>
        <taxon>Craniata</taxon>
        <taxon>Vertebrata</taxon>
        <taxon>Euteleostomi</taxon>
        <taxon>Mammalia</taxon>
        <taxon>Eutheria</taxon>
        <taxon>Euarchontoglires</taxon>
        <taxon>Primates</taxon>
        <taxon>Haplorrhini</taxon>
        <taxon>Catarrhini</taxon>
        <taxon>Hominidae</taxon>
        <taxon>Homo</taxon>
    </lineage>
</organism>
<name>RFXK_HUMAN</name>
<feature type="chain" id="PRO_0000067049" description="DNA-binding protein RFXANK">
    <location>
        <begin position="1"/>
        <end position="260"/>
    </location>
</feature>
<feature type="repeat" description="ANK 1">
    <location>
        <begin position="89"/>
        <end position="118"/>
    </location>
</feature>
<feature type="repeat" description="ANK 2">
    <location>
        <begin position="123"/>
        <end position="152"/>
    </location>
</feature>
<feature type="repeat" description="ANK 3">
    <location>
        <begin position="156"/>
        <end position="185"/>
    </location>
</feature>
<feature type="repeat" description="ANK 4">
    <location>
        <begin position="189"/>
        <end position="218"/>
    </location>
</feature>
<feature type="repeat" description="ANK 5">
    <location>
        <begin position="222"/>
        <end position="251"/>
    </location>
</feature>
<feature type="region of interest" description="Disordered" evidence="2">
    <location>
        <begin position="1"/>
        <end position="79"/>
    </location>
</feature>
<feature type="compositionally biased region" description="Acidic residues" evidence="2">
    <location>
        <begin position="22"/>
        <end position="33"/>
    </location>
</feature>
<feature type="compositionally biased region" description="Polar residues" evidence="2">
    <location>
        <begin position="57"/>
        <end position="77"/>
    </location>
</feature>
<feature type="splice variant" id="VSP_000283" description="In isoform 2." evidence="11">
    <location>
        <position position="63"/>
    </location>
</feature>
<feature type="splice variant" id="VSP_000284" description="In isoform 2 and isoform 3." evidence="11 12">
    <original>SLSIHQLAAQGELDQLKEHLRKG</original>
    <variation>C</variation>
    <location>
        <begin position="91"/>
        <end position="113"/>
    </location>
</feature>
<feature type="splice variant" id="VSP_054618" description="In isoform 2." evidence="11">
    <location>
        <begin position="159"/>
        <end position="172"/>
    </location>
</feature>
<feature type="sequence variant" id="VAR_048311" description="In dbSNP:rs34282046.">
    <original>E</original>
    <variation>D</variation>
    <location>
        <position position="48"/>
    </location>
</feature>
<feature type="sequence variant" id="VAR_089568" description="In MHC2D2; uncertain significance." evidence="9">
    <original>D</original>
    <variation>H</variation>
    <location>
        <position position="121"/>
    </location>
</feature>
<feature type="sequence variant" id="VAR_089569" description="In MHC2D2; uncertain significance." evidence="8">
    <original>L</original>
    <variation>P</variation>
    <location>
        <position position="144"/>
    </location>
</feature>
<feature type="sequence variant" id="VAR_009941" description="In MHC2D2; loss of expression; dbSNP:rs751386365." evidence="4 6">
    <original>L</original>
    <variation>P</variation>
    <location>
        <position position="195"/>
    </location>
</feature>
<feature type="sequence variant" id="VAR_089570" description="In MHC2D2; uncertain significance." evidence="9">
    <location>
        <begin position="212"/>
        <end position="260"/>
    </location>
</feature>
<feature type="sequence variant" id="VAR_014472" description="In dbSNP:rs1802498.">
    <original>Q</original>
    <variation>E</variation>
    <location>
        <position position="251"/>
    </location>
</feature>
<feature type="mutagenesis site" description="Loss of expression." evidence="6">
    <original>D</original>
    <variation>V</variation>
    <location>
        <position position="121"/>
    </location>
</feature>
<feature type="mutagenesis site" description="Loss of interaction with RFX5." evidence="6">
    <original>Y</original>
    <variation>A</variation>
    <location>
        <position position="224"/>
    </location>
</feature>
<feature type="helix" evidence="14">
    <location>
        <begin position="94"/>
        <end position="99"/>
    </location>
</feature>
<feature type="helix" evidence="14">
    <location>
        <begin position="103"/>
        <end position="110"/>
    </location>
</feature>
<feature type="helix" evidence="14">
    <location>
        <begin position="115"/>
        <end position="118"/>
    </location>
</feature>
<feature type="helix" evidence="14">
    <location>
        <begin position="127"/>
        <end position="133"/>
    </location>
</feature>
<feature type="helix" evidence="14">
    <location>
        <begin position="137"/>
        <end position="146"/>
    </location>
</feature>
<feature type="helix" evidence="14">
    <location>
        <begin position="160"/>
        <end position="166"/>
    </location>
</feature>
<feature type="helix" evidence="14">
    <location>
        <begin position="170"/>
        <end position="177"/>
    </location>
</feature>
<feature type="turn" evidence="14">
    <location>
        <begin position="178"/>
        <end position="180"/>
    </location>
</feature>
<feature type="helix" evidence="14">
    <location>
        <begin position="193"/>
        <end position="199"/>
    </location>
</feature>
<feature type="helix" evidence="14">
    <location>
        <begin position="203"/>
        <end position="211"/>
    </location>
</feature>
<feature type="helix" evidence="14">
    <location>
        <begin position="226"/>
        <end position="233"/>
    </location>
</feature>
<feature type="helix" evidence="14">
    <location>
        <begin position="236"/>
        <end position="249"/>
    </location>
</feature>
<evidence type="ECO:0000250" key="1">
    <source>
        <dbReference type="UniProtKB" id="Q9Z205"/>
    </source>
</evidence>
<evidence type="ECO:0000256" key="2">
    <source>
        <dbReference type="SAM" id="MobiDB-lite"/>
    </source>
</evidence>
<evidence type="ECO:0000269" key="3">
    <source>
    </source>
</evidence>
<evidence type="ECO:0000269" key="4">
    <source>
    </source>
</evidence>
<evidence type="ECO:0000269" key="5">
    <source>
    </source>
</evidence>
<evidence type="ECO:0000269" key="6">
    <source>
    </source>
</evidence>
<evidence type="ECO:0000269" key="7">
    <source>
    </source>
</evidence>
<evidence type="ECO:0000269" key="8">
    <source>
    </source>
</evidence>
<evidence type="ECO:0000269" key="9">
    <source>
    </source>
</evidence>
<evidence type="ECO:0000269" key="10">
    <source>
    </source>
</evidence>
<evidence type="ECO:0000303" key="11">
    <source>
    </source>
</evidence>
<evidence type="ECO:0000303" key="12">
    <source>
    </source>
</evidence>
<evidence type="ECO:0000312" key="13">
    <source>
        <dbReference type="PDB" id="6MEW"/>
    </source>
</evidence>
<evidence type="ECO:0007829" key="14">
    <source>
        <dbReference type="PDB" id="3V30"/>
    </source>
</evidence>